<evidence type="ECO:0000255" key="1">
    <source>
        <dbReference type="HAMAP-Rule" id="MF_00182"/>
    </source>
</evidence>
<name>FMT_CLASE</name>
<feature type="chain" id="PRO_1000077293" description="Methionyl-tRNA formyltransferase">
    <location>
        <begin position="1"/>
        <end position="305"/>
    </location>
</feature>
<feature type="binding site" evidence="1">
    <location>
        <begin position="108"/>
        <end position="111"/>
    </location>
    <ligand>
        <name>(6S)-5,6,7,8-tetrahydrofolate</name>
        <dbReference type="ChEBI" id="CHEBI:57453"/>
    </ligand>
</feature>
<comment type="function">
    <text evidence="1">Attaches a formyl group to the free amino group of methionyl-tRNA(fMet). The formyl group appears to play a dual role in the initiator identity of N-formylmethionyl-tRNA by promoting its recognition by IF2 and preventing the misappropriation of this tRNA by the elongation apparatus.</text>
</comment>
<comment type="catalytic activity">
    <reaction evidence="1">
        <text>L-methionyl-tRNA(fMet) + (6R)-10-formyltetrahydrofolate = N-formyl-L-methionyl-tRNA(fMet) + (6S)-5,6,7,8-tetrahydrofolate + H(+)</text>
        <dbReference type="Rhea" id="RHEA:24380"/>
        <dbReference type="Rhea" id="RHEA-COMP:9952"/>
        <dbReference type="Rhea" id="RHEA-COMP:9953"/>
        <dbReference type="ChEBI" id="CHEBI:15378"/>
        <dbReference type="ChEBI" id="CHEBI:57453"/>
        <dbReference type="ChEBI" id="CHEBI:78530"/>
        <dbReference type="ChEBI" id="CHEBI:78844"/>
        <dbReference type="ChEBI" id="CHEBI:195366"/>
        <dbReference type="EC" id="2.1.2.9"/>
    </reaction>
</comment>
<comment type="similarity">
    <text evidence="1">Belongs to the Fmt family.</text>
</comment>
<proteinExistence type="inferred from homology"/>
<reference key="1">
    <citation type="journal article" date="2008" name="J. Bacteriol.">
        <title>Genome of the actinomycete plant pathogen Clavibacter michiganensis subsp. sepedonicus suggests recent niche adaptation.</title>
        <authorList>
            <person name="Bentley S.D."/>
            <person name="Corton C."/>
            <person name="Brown S.E."/>
            <person name="Barron A."/>
            <person name="Clark L."/>
            <person name="Doggett J."/>
            <person name="Harris B."/>
            <person name="Ormond D."/>
            <person name="Quail M.A."/>
            <person name="May G."/>
            <person name="Francis D."/>
            <person name="Knudson D."/>
            <person name="Parkhill J."/>
            <person name="Ishimaru C.A."/>
        </authorList>
    </citation>
    <scope>NUCLEOTIDE SEQUENCE [LARGE SCALE GENOMIC DNA]</scope>
    <source>
        <strain>ATCC 33113 / DSM 20744 / JCM 9667 / LMG 2889 / ICMP 2535 / C-1</strain>
    </source>
</reference>
<organism>
    <name type="scientific">Clavibacter sepedonicus</name>
    <name type="common">Clavibacter michiganensis subsp. sepedonicus</name>
    <dbReference type="NCBI Taxonomy" id="31964"/>
    <lineage>
        <taxon>Bacteria</taxon>
        <taxon>Bacillati</taxon>
        <taxon>Actinomycetota</taxon>
        <taxon>Actinomycetes</taxon>
        <taxon>Micrococcales</taxon>
        <taxon>Microbacteriaceae</taxon>
        <taxon>Clavibacter</taxon>
    </lineage>
</organism>
<protein>
    <recommendedName>
        <fullName evidence="1">Methionyl-tRNA formyltransferase</fullName>
        <ecNumber evidence="1">2.1.2.9</ecNumber>
    </recommendedName>
</protein>
<sequence>MRLVFAGTPLAAVPSLQRLAASGHEVALVVTRADAPLGRKRVLTPSPVAAEAERLGIPTLRVNRLDDDATARIAAVGAELGVIVAYGGLVREPLLSTPARGWINLHFSLLPRWRGAAPVQRSIMAGERVTGASVFQLERGMDTGPVFSMEERPTGDHETAGHVLDALAVQGADLLARTVDAIGAGTAVARPQEGEPTLAPKTTIDDGRVDWARSADEVLARIRGVTPEPGAHTSVDDVRLKIHRAAALRDAAPLEPGRIAALDGRVAIGTASHPVELIQVQPAGKSPMPAADWWRGVTTKDVIAR</sequence>
<gene>
    <name evidence="1" type="primary">fmt</name>
    <name type="ordered locus">CMS2022</name>
</gene>
<accession>B0REV2</accession>
<keyword id="KW-0648">Protein biosynthesis</keyword>
<keyword id="KW-0808">Transferase</keyword>
<dbReference type="EC" id="2.1.2.9" evidence="1"/>
<dbReference type="EMBL" id="AM849034">
    <property type="protein sequence ID" value="CAQ02118.1"/>
    <property type="molecule type" value="Genomic_DNA"/>
</dbReference>
<dbReference type="RefSeq" id="WP_012299345.1">
    <property type="nucleotide sequence ID" value="NZ_MZMN01000003.1"/>
</dbReference>
<dbReference type="SMR" id="B0REV2"/>
<dbReference type="STRING" id="31964.CMS2022"/>
<dbReference type="KEGG" id="cms:CMS2022"/>
<dbReference type="eggNOG" id="COG0223">
    <property type="taxonomic scope" value="Bacteria"/>
</dbReference>
<dbReference type="HOGENOM" id="CLU_033347_1_0_11"/>
<dbReference type="OrthoDB" id="9802815at2"/>
<dbReference type="Proteomes" id="UP000001318">
    <property type="component" value="Chromosome"/>
</dbReference>
<dbReference type="GO" id="GO:0005829">
    <property type="term" value="C:cytosol"/>
    <property type="evidence" value="ECO:0007669"/>
    <property type="project" value="TreeGrafter"/>
</dbReference>
<dbReference type="GO" id="GO:0004479">
    <property type="term" value="F:methionyl-tRNA formyltransferase activity"/>
    <property type="evidence" value="ECO:0007669"/>
    <property type="project" value="UniProtKB-UniRule"/>
</dbReference>
<dbReference type="CDD" id="cd08646">
    <property type="entry name" value="FMT_core_Met-tRNA-FMT_N"/>
    <property type="match status" value="1"/>
</dbReference>
<dbReference type="CDD" id="cd08704">
    <property type="entry name" value="Met_tRNA_FMT_C"/>
    <property type="match status" value="1"/>
</dbReference>
<dbReference type="Gene3D" id="3.40.50.12230">
    <property type="match status" value="1"/>
</dbReference>
<dbReference type="HAMAP" id="MF_00182">
    <property type="entry name" value="Formyl_trans"/>
    <property type="match status" value="1"/>
</dbReference>
<dbReference type="InterPro" id="IPR005794">
    <property type="entry name" value="Fmt"/>
</dbReference>
<dbReference type="InterPro" id="IPR005793">
    <property type="entry name" value="Formyl_trans_C"/>
</dbReference>
<dbReference type="InterPro" id="IPR002376">
    <property type="entry name" value="Formyl_transf_N"/>
</dbReference>
<dbReference type="InterPro" id="IPR036477">
    <property type="entry name" value="Formyl_transf_N_sf"/>
</dbReference>
<dbReference type="InterPro" id="IPR011034">
    <property type="entry name" value="Formyl_transferase-like_C_sf"/>
</dbReference>
<dbReference type="InterPro" id="IPR044135">
    <property type="entry name" value="Met-tRNA-FMT_C"/>
</dbReference>
<dbReference type="InterPro" id="IPR041711">
    <property type="entry name" value="Met-tRNA-FMT_N"/>
</dbReference>
<dbReference type="NCBIfam" id="TIGR00460">
    <property type="entry name" value="fmt"/>
    <property type="match status" value="1"/>
</dbReference>
<dbReference type="PANTHER" id="PTHR11138">
    <property type="entry name" value="METHIONYL-TRNA FORMYLTRANSFERASE"/>
    <property type="match status" value="1"/>
</dbReference>
<dbReference type="PANTHER" id="PTHR11138:SF5">
    <property type="entry name" value="METHIONYL-TRNA FORMYLTRANSFERASE, MITOCHONDRIAL"/>
    <property type="match status" value="1"/>
</dbReference>
<dbReference type="Pfam" id="PF02911">
    <property type="entry name" value="Formyl_trans_C"/>
    <property type="match status" value="1"/>
</dbReference>
<dbReference type="Pfam" id="PF00551">
    <property type="entry name" value="Formyl_trans_N"/>
    <property type="match status" value="1"/>
</dbReference>
<dbReference type="SUPFAM" id="SSF50486">
    <property type="entry name" value="FMT C-terminal domain-like"/>
    <property type="match status" value="1"/>
</dbReference>
<dbReference type="SUPFAM" id="SSF53328">
    <property type="entry name" value="Formyltransferase"/>
    <property type="match status" value="1"/>
</dbReference>